<proteinExistence type="inferred from homology"/>
<comment type="function">
    <text evidence="1">Member of a network of 50S ribosomal subunit biogenesis factors which assembles along the 30S-50S interface, preventing incorrect 23S rRNA structures from forming. Promotes peptidyl transferase center (PTC) maturation.</text>
</comment>
<comment type="subcellular location">
    <subcellularLocation>
        <location evidence="1">Cytoplasm</location>
    </subcellularLocation>
    <text evidence="1">Associates with late stage pre-50S ribosomal subunits.</text>
</comment>
<comment type="similarity">
    <text evidence="1">Belongs to the DarP family.</text>
</comment>
<name>DARP_PASMU</name>
<organism>
    <name type="scientific">Pasteurella multocida (strain Pm70)</name>
    <dbReference type="NCBI Taxonomy" id="272843"/>
    <lineage>
        <taxon>Bacteria</taxon>
        <taxon>Pseudomonadati</taxon>
        <taxon>Pseudomonadota</taxon>
        <taxon>Gammaproteobacteria</taxon>
        <taxon>Pasteurellales</taxon>
        <taxon>Pasteurellaceae</taxon>
        <taxon>Pasteurella</taxon>
    </lineage>
</organism>
<protein>
    <recommendedName>
        <fullName evidence="1">Dual-action ribosomal maturation protein DarP</fullName>
    </recommendedName>
    <alternativeName>
        <fullName evidence="1">Large ribosomal subunit assembly factor DarP</fullName>
    </alternativeName>
</protein>
<dbReference type="EMBL" id="AE004439">
    <property type="protein sequence ID" value="AAK02203.1"/>
    <property type="molecule type" value="Genomic_DNA"/>
</dbReference>
<dbReference type="SMR" id="Q9CPC8"/>
<dbReference type="STRING" id="272843.PM0119"/>
<dbReference type="EnsemblBacteria" id="AAK02203">
    <property type="protein sequence ID" value="AAK02203"/>
    <property type="gene ID" value="PM0119"/>
</dbReference>
<dbReference type="KEGG" id="pmu:PM0119"/>
<dbReference type="PATRIC" id="fig|272843.6.peg.123"/>
<dbReference type="HOGENOM" id="CLU_106757_2_0_6"/>
<dbReference type="OrthoDB" id="5293604at2"/>
<dbReference type="Proteomes" id="UP000000809">
    <property type="component" value="Chromosome"/>
</dbReference>
<dbReference type="GO" id="GO:0005829">
    <property type="term" value="C:cytosol"/>
    <property type="evidence" value="ECO:0007669"/>
    <property type="project" value="TreeGrafter"/>
</dbReference>
<dbReference type="GO" id="GO:0043022">
    <property type="term" value="F:ribosome binding"/>
    <property type="evidence" value="ECO:0007669"/>
    <property type="project" value="UniProtKB-UniRule"/>
</dbReference>
<dbReference type="GO" id="GO:0019843">
    <property type="term" value="F:rRNA binding"/>
    <property type="evidence" value="ECO:0007669"/>
    <property type="project" value="UniProtKB-UniRule"/>
</dbReference>
<dbReference type="GO" id="GO:1902626">
    <property type="term" value="P:assembly of large subunit precursor of preribosome"/>
    <property type="evidence" value="ECO:0007669"/>
    <property type="project" value="UniProtKB-UniRule"/>
</dbReference>
<dbReference type="CDD" id="cd16331">
    <property type="entry name" value="YjgA-like"/>
    <property type="match status" value="1"/>
</dbReference>
<dbReference type="Gene3D" id="1.10.60.30">
    <property type="entry name" value="PSPTO4464-like domains"/>
    <property type="match status" value="2"/>
</dbReference>
<dbReference type="HAMAP" id="MF_00765">
    <property type="entry name" value="DarP"/>
    <property type="match status" value="1"/>
</dbReference>
<dbReference type="InterPro" id="IPR006839">
    <property type="entry name" value="DarP"/>
</dbReference>
<dbReference type="InterPro" id="IPR023153">
    <property type="entry name" value="DarP_sf"/>
</dbReference>
<dbReference type="NCBIfam" id="NF003593">
    <property type="entry name" value="PRK05255.1-1"/>
    <property type="match status" value="1"/>
</dbReference>
<dbReference type="PANTHER" id="PTHR38101">
    <property type="entry name" value="UPF0307 PROTEIN YJGA"/>
    <property type="match status" value="1"/>
</dbReference>
<dbReference type="PANTHER" id="PTHR38101:SF1">
    <property type="entry name" value="UPF0307 PROTEIN YJGA"/>
    <property type="match status" value="1"/>
</dbReference>
<dbReference type="Pfam" id="PF04751">
    <property type="entry name" value="DarP"/>
    <property type="match status" value="1"/>
</dbReference>
<dbReference type="PIRSF" id="PIRSF016183">
    <property type="entry name" value="UCP016183"/>
    <property type="match status" value="1"/>
</dbReference>
<dbReference type="SUPFAM" id="SSF158710">
    <property type="entry name" value="PSPTO4464-like"/>
    <property type="match status" value="1"/>
</dbReference>
<reference key="1">
    <citation type="journal article" date="2001" name="Proc. Natl. Acad. Sci. U.S.A.">
        <title>Complete genomic sequence of Pasteurella multocida Pm70.</title>
        <authorList>
            <person name="May B.J."/>
            <person name="Zhang Q."/>
            <person name="Li L.L."/>
            <person name="Paustian M.L."/>
            <person name="Whittam T.S."/>
            <person name="Kapur V."/>
        </authorList>
    </citation>
    <scope>NUCLEOTIDE SEQUENCE [LARGE SCALE GENOMIC DNA]</scope>
    <source>
        <strain>Pm70</strain>
    </source>
</reference>
<evidence type="ECO:0000255" key="1">
    <source>
        <dbReference type="HAMAP-Rule" id="MF_00765"/>
    </source>
</evidence>
<gene>
    <name evidence="1" type="primary">darP</name>
    <name type="ordered locus">PM0119</name>
</gene>
<feature type="chain" id="PRO_0000208221" description="Dual-action ribosomal maturation protein DarP">
    <location>
        <begin position="1"/>
        <end position="180"/>
    </location>
</feature>
<sequence>MAKRGKNKIEWDNTDWEQEEEEIIWVSKSEIKRDAEALKKLGEKLVDLTKAKLEKIPLEEKLLEAIELAQRLQKEARRRQLQYIGKLLRNIDVEPIQDALEKLENKHQQQQAMLHKLEMLRDTLIDNPEAITQFLEQHPDADRQHLRNLVRAAQKEKAQNKPPKAYREIFQYLKDFMLED</sequence>
<keyword id="KW-0963">Cytoplasm</keyword>
<keyword id="KW-1185">Reference proteome</keyword>
<keyword id="KW-0690">Ribosome biogenesis</keyword>
<keyword id="KW-0694">RNA-binding</keyword>
<keyword id="KW-0699">rRNA-binding</keyword>
<accession>Q9CPC8</accession>